<accession>A2QAS2</accession>
<dbReference type="EC" id="3.2.1.113" evidence="3"/>
<dbReference type="EMBL" id="AM269984">
    <property type="protein sequence ID" value="CAK37306.1"/>
    <property type="molecule type" value="Genomic_DNA"/>
</dbReference>
<dbReference type="RefSeq" id="XP_001389661.1">
    <property type="nucleotide sequence ID" value="XM_001389624.2"/>
</dbReference>
<dbReference type="SMR" id="A2QAS2"/>
<dbReference type="CAZy" id="GH47">
    <property type="family name" value="Glycoside Hydrolase Family 47"/>
</dbReference>
<dbReference type="GlyCosmos" id="A2QAS2">
    <property type="glycosylation" value="7 sites, No reported glycans"/>
</dbReference>
<dbReference type="EnsemblFungi" id="CAK37306">
    <property type="protein sequence ID" value="CAK37306"/>
    <property type="gene ID" value="An01g12550"/>
</dbReference>
<dbReference type="GeneID" id="4977321"/>
<dbReference type="KEGG" id="ang:An01g12550"/>
<dbReference type="VEuPathDB" id="FungiDB:An01g12550"/>
<dbReference type="HOGENOM" id="CLU_003818_0_2_1"/>
<dbReference type="UniPathway" id="UPA00378"/>
<dbReference type="Proteomes" id="UP000006706">
    <property type="component" value="Chromosome 2R"/>
</dbReference>
<dbReference type="GO" id="GO:0060205">
    <property type="term" value="C:cytoplasmic vesicle lumen"/>
    <property type="evidence" value="ECO:0007669"/>
    <property type="project" value="UniProtKB-SubCell"/>
</dbReference>
<dbReference type="GO" id="GO:0005783">
    <property type="term" value="C:endoplasmic reticulum"/>
    <property type="evidence" value="ECO:0007669"/>
    <property type="project" value="TreeGrafter"/>
</dbReference>
<dbReference type="GO" id="GO:0016020">
    <property type="term" value="C:membrane"/>
    <property type="evidence" value="ECO:0007669"/>
    <property type="project" value="InterPro"/>
</dbReference>
<dbReference type="GO" id="GO:0005509">
    <property type="term" value="F:calcium ion binding"/>
    <property type="evidence" value="ECO:0007669"/>
    <property type="project" value="InterPro"/>
</dbReference>
<dbReference type="GO" id="GO:0004571">
    <property type="term" value="F:mannosyl-oligosaccharide 1,2-alpha-mannosidase activity"/>
    <property type="evidence" value="ECO:0007669"/>
    <property type="project" value="UniProtKB-EC"/>
</dbReference>
<dbReference type="GO" id="GO:0005975">
    <property type="term" value="P:carbohydrate metabolic process"/>
    <property type="evidence" value="ECO:0007669"/>
    <property type="project" value="InterPro"/>
</dbReference>
<dbReference type="GO" id="GO:0036503">
    <property type="term" value="P:ERAD pathway"/>
    <property type="evidence" value="ECO:0007669"/>
    <property type="project" value="UniProtKB-ARBA"/>
</dbReference>
<dbReference type="GO" id="GO:0006486">
    <property type="term" value="P:protein glycosylation"/>
    <property type="evidence" value="ECO:0007669"/>
    <property type="project" value="UniProtKB-UniPathway"/>
</dbReference>
<dbReference type="FunFam" id="1.50.10.10:FF:000047">
    <property type="entry name" value="Mannosyl-oligosaccharide alpha-1,2-mannosidase"/>
    <property type="match status" value="1"/>
</dbReference>
<dbReference type="Gene3D" id="1.50.10.10">
    <property type="match status" value="1"/>
</dbReference>
<dbReference type="InterPro" id="IPR012341">
    <property type="entry name" value="6hp_glycosidase-like_sf"/>
</dbReference>
<dbReference type="InterPro" id="IPR001382">
    <property type="entry name" value="Glyco_hydro_47"/>
</dbReference>
<dbReference type="InterPro" id="IPR050749">
    <property type="entry name" value="Glycosyl_Hydrolase_47"/>
</dbReference>
<dbReference type="InterPro" id="IPR036026">
    <property type="entry name" value="Seven-hairpin_glycosidases"/>
</dbReference>
<dbReference type="PANTHER" id="PTHR11742:SF101">
    <property type="entry name" value="MANNOSYL-OLIGOSACCHARIDE ALPHA-1,2-MANNOSIDASE 1B"/>
    <property type="match status" value="1"/>
</dbReference>
<dbReference type="PANTHER" id="PTHR11742">
    <property type="entry name" value="MANNOSYL-OLIGOSACCHARIDE ALPHA-1,2-MANNOSIDASE-RELATED"/>
    <property type="match status" value="1"/>
</dbReference>
<dbReference type="Pfam" id="PF01532">
    <property type="entry name" value="Glyco_hydro_47"/>
    <property type="match status" value="1"/>
</dbReference>
<dbReference type="PRINTS" id="PR00747">
    <property type="entry name" value="GLYHDRLASE47"/>
</dbReference>
<dbReference type="SUPFAM" id="SSF48225">
    <property type="entry name" value="Seven-hairpin glycosidases"/>
    <property type="match status" value="1"/>
</dbReference>
<sequence length="513" mass="55929">MHLSSLSLSLTALAIVSPSAAYPHLGSSQPVLHTNSDTTQSRADAIKAAFSHAWDGYLQYAFPHDELHPVSNGYGDSRNGWGASAVDALSTAVIMRNATIVNQILDHVAKIDYSKTNTTVSLFETTIRYLGGMLSGYDLLKGPVSDLVQDSSKIDVLLTQSKNLGDVLKFAFDTPSGVPYNNLNITSGGNDGAKTNGLAVTGTLALEWTRLSDLTGDTTYADLSQKAESYLLNPQPKSAEPFPGLVGSNINISNGQFTDAQVSWNGGDDSYYEYLIKMYVYDPKRFGLYKDRWVAAAQSTMQHLASHPSTRPDLTFLASYNNGTLGLSSQHLTCFDGGSFLLGGTVLNRTDFINFGLDLVSGCHDTYNSTLTGIGPESFSWDTSDIPSSQQSLYEKAGFYITSGAYILRPEVIESFYYAWRATGQETYREWIWSAFSAVNDYCRTDSGFSGLTDVNAANGGSRYDNQESFLFAEVMKYSYMAFAEDAAWQVQPGSGNQFVFNTEAHPVRVSST</sequence>
<protein>
    <recommendedName>
        <fullName>Probable mannosyl-oligosaccharide alpha-1,2-mannosidase 1B</fullName>
        <ecNumber evidence="3">3.2.1.113</ecNumber>
    </recommendedName>
    <alternativeName>
        <fullName>Class I alpha-mannosidase 1B</fullName>
    </alternativeName>
    <alternativeName>
        <fullName>Man(9)-alpha-mannosidase 1B</fullName>
    </alternativeName>
</protein>
<gene>
    <name type="primary">mns1B</name>
    <name type="synonym">msdS</name>
    <name type="ORF">An01g12550</name>
</gene>
<comment type="function">
    <text evidence="1">Involved in the maturation of Asn-linked oligosaccharides. Progressively trims alpha-1,2-linked mannose residues from Man(9)GlcNAc(2) to produce Man(5)GlcNAc(2) (By similarity).</text>
</comment>
<comment type="catalytic activity">
    <reaction evidence="3">
        <text>N(4)-(alpha-D-Man-(1-&gt;2)-alpha-D-Man-(1-&gt;2)-alpha-D-Man-(1-&gt;3)-[alpha-D-Man-(1-&gt;2)-alpha-D-Man-(1-&gt;3)-[alpha-D-Man-(1-&gt;2)-alpha-D-Man-(1-&gt;6)]-alpha-D-Man-(1-&gt;6)]-beta-D-Man-(1-&gt;4)-beta-D-GlcNAc-(1-&gt;4)-beta-D-GlcNAc)-L-asparaginyl-[protein] (N-glucan mannose isomer 9A1,2,3B1,2,3) + 4 H2O = N(4)-(alpha-D-Man-(1-&gt;3)-[alpha-D-Man-(1-&gt;3)-[alpha-D-Man-(1-&gt;6)]-alpha-D-Man-(1-&gt;6)]-beta-D-Man-(1-&gt;4)-beta-D-GlcNAc-(1-&gt;4)-beta-D-GlcNAc)-L-asparaginyl-[protein] (N-glucan mannose isomer 5A1,2) + 4 beta-D-mannose</text>
        <dbReference type="Rhea" id="RHEA:56008"/>
        <dbReference type="Rhea" id="RHEA-COMP:14356"/>
        <dbReference type="Rhea" id="RHEA-COMP:14367"/>
        <dbReference type="ChEBI" id="CHEBI:15377"/>
        <dbReference type="ChEBI" id="CHEBI:28563"/>
        <dbReference type="ChEBI" id="CHEBI:59087"/>
        <dbReference type="ChEBI" id="CHEBI:139493"/>
        <dbReference type="EC" id="3.2.1.113"/>
    </reaction>
</comment>
<comment type="catalytic activity">
    <reaction evidence="3">
        <text>N(4)-(alpha-D-Man-(1-&gt;2)-alpha-D-Man-(1-&gt;2)-alpha-D-Man-(1-&gt;3)-[alpha-D-Man-(1-&gt;3)-[alpha-D-Man-(1-&gt;2)-alpha-D-Man-(1-&gt;6)]-alpha-D-Man-(1-&gt;6)]-beta-D-Man-(1-&gt;4)-beta-D-GlcNAc-(1-&gt;4)-beta-D-GlcNAc)-L-asparaginyl-[protein] (N-glucan mannose isomer 8A1,2,3B1,3) + 3 H2O = N(4)-(alpha-D-Man-(1-&gt;3)-[alpha-D-Man-(1-&gt;3)-[alpha-D-Man-(1-&gt;6)]-alpha-D-Man-(1-&gt;6)]-beta-D-Man-(1-&gt;4)-beta-D-GlcNAc-(1-&gt;4)-beta-D-GlcNAc)-L-asparaginyl-[protein] (N-glucan mannose isomer 5A1,2) + 3 beta-D-mannose</text>
        <dbReference type="Rhea" id="RHEA:56028"/>
        <dbReference type="Rhea" id="RHEA-COMP:14358"/>
        <dbReference type="Rhea" id="RHEA-COMP:14367"/>
        <dbReference type="ChEBI" id="CHEBI:15377"/>
        <dbReference type="ChEBI" id="CHEBI:28563"/>
        <dbReference type="ChEBI" id="CHEBI:59087"/>
        <dbReference type="ChEBI" id="CHEBI:60628"/>
        <dbReference type="EC" id="3.2.1.113"/>
    </reaction>
</comment>
<comment type="cofactor">
    <cofactor evidence="4">
        <name>Ca(2+)</name>
        <dbReference type="ChEBI" id="CHEBI:29108"/>
    </cofactor>
    <cofactor evidence="4">
        <name>Mg(2+)</name>
        <dbReference type="ChEBI" id="CHEBI:18420"/>
    </cofactor>
    <text evidence="4">Ca(2+). Can also use Mg(2+), but with lower efficiency.</text>
</comment>
<comment type="pathway">
    <text evidence="3">Protein modification; protein glycosylation.</text>
</comment>
<comment type="subunit">
    <text evidence="1">Monomer.</text>
</comment>
<comment type="subcellular location">
    <subcellularLocation>
        <location evidence="1">Cytoplasmic vesicle lumen</location>
    </subcellularLocation>
</comment>
<comment type="similarity">
    <text evidence="6">Belongs to the glycosyl hydrolase 47 family.</text>
</comment>
<organism>
    <name type="scientific">Aspergillus niger (strain ATCC MYA-4892 / CBS 513.88 / FGSC A1513)</name>
    <dbReference type="NCBI Taxonomy" id="425011"/>
    <lineage>
        <taxon>Eukaryota</taxon>
        <taxon>Fungi</taxon>
        <taxon>Dikarya</taxon>
        <taxon>Ascomycota</taxon>
        <taxon>Pezizomycotina</taxon>
        <taxon>Eurotiomycetes</taxon>
        <taxon>Eurotiomycetidae</taxon>
        <taxon>Eurotiales</taxon>
        <taxon>Aspergillaceae</taxon>
        <taxon>Aspergillus</taxon>
        <taxon>Aspergillus subgen. Circumdati</taxon>
    </lineage>
</organism>
<name>MNS1B_ASPNC</name>
<evidence type="ECO:0000250" key="1"/>
<evidence type="ECO:0000250" key="2">
    <source>
        <dbReference type="UniProtKB" id="P31723"/>
    </source>
</evidence>
<evidence type="ECO:0000250" key="3">
    <source>
        <dbReference type="UniProtKB" id="P32906"/>
    </source>
</evidence>
<evidence type="ECO:0000250" key="4">
    <source>
        <dbReference type="UniProtKB" id="Q2ULB2"/>
    </source>
</evidence>
<evidence type="ECO:0000255" key="5"/>
<evidence type="ECO:0000305" key="6"/>
<reference key="1">
    <citation type="journal article" date="2007" name="Nat. Biotechnol.">
        <title>Genome sequencing and analysis of the versatile cell factory Aspergillus niger CBS 513.88.</title>
        <authorList>
            <person name="Pel H.J."/>
            <person name="de Winde J.H."/>
            <person name="Archer D.B."/>
            <person name="Dyer P.S."/>
            <person name="Hofmann G."/>
            <person name="Schaap P.J."/>
            <person name="Turner G."/>
            <person name="de Vries R.P."/>
            <person name="Albang R."/>
            <person name="Albermann K."/>
            <person name="Andersen M.R."/>
            <person name="Bendtsen J.D."/>
            <person name="Benen J.A.E."/>
            <person name="van den Berg M."/>
            <person name="Breestraat S."/>
            <person name="Caddick M.X."/>
            <person name="Contreras R."/>
            <person name="Cornell M."/>
            <person name="Coutinho P.M."/>
            <person name="Danchin E.G.J."/>
            <person name="Debets A.J.M."/>
            <person name="Dekker P."/>
            <person name="van Dijck P.W.M."/>
            <person name="van Dijk A."/>
            <person name="Dijkhuizen L."/>
            <person name="Driessen A.J.M."/>
            <person name="d'Enfert C."/>
            <person name="Geysens S."/>
            <person name="Goosen C."/>
            <person name="Groot G.S.P."/>
            <person name="de Groot P.W.J."/>
            <person name="Guillemette T."/>
            <person name="Henrissat B."/>
            <person name="Herweijer M."/>
            <person name="van den Hombergh J.P.T.W."/>
            <person name="van den Hondel C.A.M.J.J."/>
            <person name="van der Heijden R.T.J.M."/>
            <person name="van der Kaaij R.M."/>
            <person name="Klis F.M."/>
            <person name="Kools H.J."/>
            <person name="Kubicek C.P."/>
            <person name="van Kuyk P.A."/>
            <person name="Lauber J."/>
            <person name="Lu X."/>
            <person name="van der Maarel M.J.E.C."/>
            <person name="Meulenberg R."/>
            <person name="Menke H."/>
            <person name="Mortimer M.A."/>
            <person name="Nielsen J."/>
            <person name="Oliver S.G."/>
            <person name="Olsthoorn M."/>
            <person name="Pal K."/>
            <person name="van Peij N.N.M.E."/>
            <person name="Ram A.F.J."/>
            <person name="Rinas U."/>
            <person name="Roubos J.A."/>
            <person name="Sagt C.M.J."/>
            <person name="Schmoll M."/>
            <person name="Sun J."/>
            <person name="Ussery D."/>
            <person name="Varga J."/>
            <person name="Vervecken W."/>
            <person name="van de Vondervoort P.J.J."/>
            <person name="Wedler H."/>
            <person name="Woesten H.A.B."/>
            <person name="Zeng A.-P."/>
            <person name="van Ooyen A.J.J."/>
            <person name="Visser J."/>
            <person name="Stam H."/>
        </authorList>
    </citation>
    <scope>NUCLEOTIDE SEQUENCE [LARGE SCALE GENOMIC DNA]</scope>
    <source>
        <strain>ATCC MYA-4892 / CBS 513.88 / FGSC A1513</strain>
    </source>
</reference>
<keyword id="KW-0119">Carbohydrate metabolism</keyword>
<keyword id="KW-0968">Cytoplasmic vesicle</keyword>
<keyword id="KW-1015">Disulfide bond</keyword>
<keyword id="KW-0325">Glycoprotein</keyword>
<keyword id="KW-0326">Glycosidase</keyword>
<keyword id="KW-0378">Hydrolase</keyword>
<keyword id="KW-0479">Metal-binding</keyword>
<keyword id="KW-1185">Reference proteome</keyword>
<keyword id="KW-0732">Signal</keyword>
<feature type="signal peptide" evidence="5">
    <location>
        <begin position="1"/>
        <end position="21"/>
    </location>
</feature>
<feature type="chain" id="PRO_5000219468" description="Probable mannosyl-oligosaccharide alpha-1,2-mannosidase 1B">
    <location>
        <begin position="22"/>
        <end position="513"/>
    </location>
</feature>
<feature type="active site" description="Proton donor" evidence="2">
    <location>
        <position position="377"/>
    </location>
</feature>
<feature type="binding site" evidence="3">
    <location>
        <position position="503"/>
    </location>
    <ligand>
        <name>Ca(2+)</name>
        <dbReference type="ChEBI" id="CHEBI:29108"/>
    </ligand>
</feature>
<feature type="glycosylation site" description="N-linked (GlcNAc...) asparagine" evidence="5">
    <location>
        <position position="97"/>
    </location>
</feature>
<feature type="glycosylation site" description="N-linked (GlcNAc...) asparagine" evidence="5">
    <location>
        <position position="117"/>
    </location>
</feature>
<feature type="glycosylation site" description="N-linked (GlcNAc...) asparagine" evidence="5">
    <location>
        <position position="184"/>
    </location>
</feature>
<feature type="glycosylation site" description="N-linked (GlcNAc...) asparagine" evidence="5">
    <location>
        <position position="251"/>
    </location>
</feature>
<feature type="glycosylation site" description="N-linked (GlcNAc...) asparagine" evidence="5">
    <location>
        <position position="322"/>
    </location>
</feature>
<feature type="glycosylation site" description="N-linked (GlcNAc...) asparagine" evidence="5">
    <location>
        <position position="348"/>
    </location>
</feature>
<feature type="glycosylation site" description="N-linked (GlcNAc...) asparagine" evidence="5">
    <location>
        <position position="368"/>
    </location>
</feature>
<feature type="disulfide bond" evidence="3">
    <location>
        <begin position="334"/>
        <end position="363"/>
    </location>
</feature>
<proteinExistence type="inferred from homology"/>